<accession>Q6L2J9</accession>
<reference key="1">
    <citation type="journal article" date="2004" name="Proc. Natl. Acad. Sci. U.S.A.">
        <title>Genome sequence of Picrophilus torridus and its implications for life around pH 0.</title>
        <authorList>
            <person name="Fuetterer O."/>
            <person name="Angelov A."/>
            <person name="Liesegang H."/>
            <person name="Gottschalk G."/>
            <person name="Schleper C."/>
            <person name="Schepers B."/>
            <person name="Dock C."/>
            <person name="Antranikian G."/>
            <person name="Liebl W."/>
        </authorList>
    </citation>
    <scope>NUCLEOTIDE SEQUENCE [LARGE SCALE GENOMIC DNA]</scope>
    <source>
        <strain>ATCC 700027 / DSM 9790 / JCM 10055 / NBRC 100828 / KAW 2/3</strain>
    </source>
</reference>
<reference key="2">
    <citation type="submission" date="2011-07" db="PDB data bank">
        <title>Structure of hypothetical protein PTO0218 from Picrophilus torridus.</title>
        <authorList>
            <consortium name="New York structural genomix research consortium (NYSGXRC)"/>
        </authorList>
    </citation>
    <scope>X-RAY CRYSTALLOGRAPHY (2.08 ANGSTROMS) OF 2-120</scope>
    <scope>SUBUNIT</scope>
</reference>
<dbReference type="EC" id="4.1.2.25" evidence="1"/>
<dbReference type="EMBL" id="AE017261">
    <property type="protein sequence ID" value="AAT42803.1"/>
    <property type="molecule type" value="Genomic_DNA"/>
</dbReference>
<dbReference type="RefSeq" id="WP_011177019.1">
    <property type="nucleotide sequence ID" value="NC_005877.1"/>
</dbReference>
<dbReference type="PDB" id="2I52">
    <property type="method" value="X-ray"/>
    <property type="resolution" value="2.08 A"/>
    <property type="chains" value="A/B/C/D/E/F=2-120"/>
</dbReference>
<dbReference type="PDBsum" id="2I52"/>
<dbReference type="SMR" id="Q6L2J9"/>
<dbReference type="STRING" id="263820.PTO0218"/>
<dbReference type="PaxDb" id="263820-PTO0218"/>
<dbReference type="DNASU" id="2844002"/>
<dbReference type="GeneID" id="2844002"/>
<dbReference type="KEGG" id="pto:PTO0218"/>
<dbReference type="PATRIC" id="fig|263820.9.peg.236"/>
<dbReference type="eggNOG" id="arCOG04705">
    <property type="taxonomic scope" value="Archaea"/>
</dbReference>
<dbReference type="HOGENOM" id="CLU_149105_1_0_2"/>
<dbReference type="InParanoid" id="Q6L2J9"/>
<dbReference type="OrthoDB" id="132689at2157"/>
<dbReference type="EvolutionaryTrace" id="Q6L2J9"/>
<dbReference type="Proteomes" id="UP000000438">
    <property type="component" value="Chromosome"/>
</dbReference>
<dbReference type="GO" id="GO:0004150">
    <property type="term" value="F:dihydroneopterin aldolase activity"/>
    <property type="evidence" value="ECO:0007669"/>
    <property type="project" value="UniProtKB-UniRule"/>
</dbReference>
<dbReference type="Gene3D" id="3.30.1300.20">
    <property type="entry name" value="7,8-dihydroneopterin aldolase (MptD)"/>
    <property type="match status" value="1"/>
</dbReference>
<dbReference type="HAMAP" id="MF_02130">
    <property type="entry name" value="DHNA_arch"/>
    <property type="match status" value="1"/>
</dbReference>
<dbReference type="InterPro" id="IPR027508">
    <property type="entry name" value="DHN_aldolase_MptD"/>
</dbReference>
<dbReference type="InterPro" id="IPR036839">
    <property type="entry name" value="MptD_sf"/>
</dbReference>
<dbReference type="InterPro" id="IPR007181">
    <property type="entry name" value="MtpD_C"/>
</dbReference>
<dbReference type="Pfam" id="PF04038">
    <property type="entry name" value="DHNA"/>
    <property type="match status" value="1"/>
</dbReference>
<dbReference type="SUPFAM" id="SSF143560">
    <property type="entry name" value="MK0786-like"/>
    <property type="match status" value="1"/>
</dbReference>
<name>MPTD_PICTO</name>
<proteinExistence type="evidence at protein level"/>
<gene>
    <name evidence="1" type="primary">mptD</name>
    <name type="ordered locus">PTO0218</name>
</gene>
<keyword id="KW-0002">3D-structure</keyword>
<keyword id="KW-0456">Lyase</keyword>
<feature type="chain" id="PRO_0000420354" description="Dihydroneopterin aldolase">
    <location>
        <begin position="1"/>
        <end position="120"/>
    </location>
</feature>
<feature type="binding site" evidence="1">
    <location>
        <position position="20"/>
    </location>
    <ligand>
        <name>substrate</name>
    </ligand>
</feature>
<feature type="binding site" evidence="1">
    <location>
        <position position="114"/>
    </location>
    <ligand>
        <name>substrate</name>
    </ligand>
</feature>
<feature type="helix" evidence="3">
    <location>
        <begin position="6"/>
        <end position="8"/>
    </location>
</feature>
<feature type="helix" evidence="3">
    <location>
        <begin position="13"/>
        <end position="32"/>
    </location>
</feature>
<feature type="turn" evidence="3">
    <location>
        <begin position="39"/>
        <end position="41"/>
    </location>
</feature>
<feature type="helix" evidence="3">
    <location>
        <begin position="42"/>
        <end position="53"/>
    </location>
</feature>
<feature type="strand" evidence="3">
    <location>
        <begin position="59"/>
        <end position="66"/>
    </location>
</feature>
<feature type="turn" evidence="3">
    <location>
        <begin position="83"/>
        <end position="85"/>
    </location>
</feature>
<feature type="strand" evidence="3">
    <location>
        <begin position="86"/>
        <end position="94"/>
    </location>
</feature>
<feature type="strand" evidence="3">
    <location>
        <begin position="97"/>
        <end position="106"/>
    </location>
</feature>
<feature type="turn" evidence="3">
    <location>
        <begin position="107"/>
        <end position="110"/>
    </location>
</feature>
<feature type="strand" evidence="3">
    <location>
        <begin position="111"/>
        <end position="119"/>
    </location>
</feature>
<protein>
    <recommendedName>
        <fullName evidence="1">Dihydroneopterin aldolase</fullName>
        <shortName evidence="1">DHNA</shortName>
        <ecNumber evidence="1">4.1.2.25</ecNumber>
    </recommendedName>
    <alternativeName>
        <fullName evidence="1">7,8-dihydroneopterin aldolase</fullName>
    </alternativeName>
</protein>
<organism>
    <name type="scientific">Picrophilus torridus (strain ATCC 700027 / DSM 9790 / JCM 10055 / NBRC 100828 / KAW 2/3)</name>
    <dbReference type="NCBI Taxonomy" id="1122961"/>
    <lineage>
        <taxon>Archaea</taxon>
        <taxon>Methanobacteriati</taxon>
        <taxon>Thermoplasmatota</taxon>
        <taxon>Thermoplasmata</taxon>
        <taxon>Thermoplasmatales</taxon>
        <taxon>Picrophilaceae</taxon>
        <taxon>Picrophilus</taxon>
    </lineage>
</organism>
<sequence>MYDPAEKYFNCTDIQRAFFEAGIKLGAIFHQYTGIPVNSENASMAEEFIERSTMIQPFVENVRISINNVKRSSGTYSYSSLNEKMLHAEVLINYNGKKVLGVLNYDEGLDYPVMYAKEVL</sequence>
<evidence type="ECO:0000255" key="1">
    <source>
        <dbReference type="HAMAP-Rule" id="MF_02130"/>
    </source>
</evidence>
<evidence type="ECO:0000269" key="2">
    <source ref="2"/>
</evidence>
<evidence type="ECO:0007829" key="3">
    <source>
        <dbReference type="PDB" id="2I52"/>
    </source>
</evidence>
<comment type="function">
    <text evidence="1">Catalyzes the conversion of 7,8-dihydroneopterin (H2Neo) to 6-hydroxymethyl-7,8-dihydropterin (6-HMD).</text>
</comment>
<comment type="catalytic activity">
    <reaction evidence="1">
        <text>7,8-dihydroneopterin = 6-hydroxymethyl-7,8-dihydropterin + glycolaldehyde</text>
        <dbReference type="Rhea" id="RHEA:10540"/>
        <dbReference type="ChEBI" id="CHEBI:17001"/>
        <dbReference type="ChEBI" id="CHEBI:17071"/>
        <dbReference type="ChEBI" id="CHEBI:44841"/>
        <dbReference type="EC" id="4.1.2.25"/>
    </reaction>
</comment>
<comment type="subunit">
    <text evidence="1 2">Homotetramer.</text>
</comment>
<comment type="similarity">
    <text evidence="1">Belongs to the archaeal dihydroneopterin aldolase family.</text>
</comment>